<accession>P34571</accession>
<dbReference type="EMBL" id="Z30662">
    <property type="protein sequence ID" value="CAA83134.1"/>
    <property type="molecule type" value="Genomic_DNA"/>
</dbReference>
<dbReference type="PIR" id="S42379">
    <property type="entry name" value="S42379"/>
</dbReference>
<dbReference type="RefSeq" id="NP_499243.1">
    <property type="nucleotide sequence ID" value="NM_066842.1"/>
</dbReference>
<dbReference type="SMR" id="P34571"/>
<dbReference type="FunCoup" id="P34571">
    <property type="interactions" value="869"/>
</dbReference>
<dbReference type="STRING" id="6239.T16H12.8.1"/>
<dbReference type="PaxDb" id="6239-T16H12.8"/>
<dbReference type="EnsemblMetazoa" id="T16H12.8.1">
    <property type="protein sequence ID" value="T16H12.8.1"/>
    <property type="gene ID" value="WBGene00011816"/>
</dbReference>
<dbReference type="GeneID" id="188561"/>
<dbReference type="KEGG" id="cel:CELE_T16H12.8"/>
<dbReference type="UCSC" id="T16H12.8">
    <property type="organism name" value="c. elegans"/>
</dbReference>
<dbReference type="AGR" id="WB:WBGene00011816"/>
<dbReference type="CTD" id="188561"/>
<dbReference type="WormBase" id="T16H12.8">
    <property type="protein sequence ID" value="CE00329"/>
    <property type="gene ID" value="WBGene00011816"/>
    <property type="gene designation" value="srt-55"/>
</dbReference>
<dbReference type="eggNOG" id="ENOG502TG2Q">
    <property type="taxonomic scope" value="Eukaryota"/>
</dbReference>
<dbReference type="GeneTree" id="ENSGT00970000195827"/>
<dbReference type="HOGENOM" id="CLU_053041_3_0_1"/>
<dbReference type="InParanoid" id="P34571"/>
<dbReference type="OMA" id="MTHALKV"/>
<dbReference type="OrthoDB" id="5826707at2759"/>
<dbReference type="PhylomeDB" id="P34571"/>
<dbReference type="PRO" id="PR:P34571"/>
<dbReference type="Proteomes" id="UP000001940">
    <property type="component" value="Chromosome III"/>
</dbReference>
<dbReference type="GO" id="GO:0016020">
    <property type="term" value="C:membrane"/>
    <property type="evidence" value="ECO:0007669"/>
    <property type="project" value="UniProtKB-SubCell"/>
</dbReference>
<dbReference type="InterPro" id="IPR019425">
    <property type="entry name" value="7TM_GPCR_serpentine_rcpt_Srt"/>
</dbReference>
<dbReference type="PANTHER" id="PTHR23021">
    <property type="entry name" value="SERPENTINE RECEPTOR, CLASS T"/>
    <property type="match status" value="1"/>
</dbReference>
<dbReference type="PANTHER" id="PTHR23021:SF28">
    <property type="entry name" value="SERPENTINE RECEPTOR, CLASS T-RELATED"/>
    <property type="match status" value="1"/>
</dbReference>
<dbReference type="Pfam" id="PF10321">
    <property type="entry name" value="7TM_GPCR_Srt"/>
    <property type="match status" value="1"/>
</dbReference>
<dbReference type="SUPFAM" id="SSF81321">
    <property type="entry name" value="Family A G protein-coupled receptor-like"/>
    <property type="match status" value="1"/>
</dbReference>
<protein>
    <recommendedName>
        <fullName>Serpentine receptor class T-55</fullName>
        <shortName>Protein srt-55</shortName>
    </recommendedName>
</protein>
<sequence length="363" mass="41638">MKLRHFLIFLMLIPISSSICFDLKTLQCWPMEIQEMALMLTARNTARYDCSGKSKSEWYETGQKRLGWGIYYISSGLFFQLIGWPVIWVFITKFSMTNALKVYRIMVFIGLIEITEIWGNSVFPGFVAVFGEVYCTSPILMTIVGKMTMVQWVLGSSSAAFLGFHRLCDMIQKLEWLVNTNTKTGLWLTVLFFYACYGSIFFDTVLFNSDYMAPLLDPMIGKQGIIYSNNFLYFHNIIVATTLILVYACLCTLWSSREMNTSSLHVSKFQRSILLQSICISLTYAIPAISFVTMFVLPIPKWFFHVSDITYQLSGGLPFIMYICLNKRVREEFLHLLRVCRKAEKSQVAVIPLGNSTVSAFNN</sequence>
<name>SRT55_CAEEL</name>
<proteinExistence type="inferred from homology"/>
<feature type="signal peptide" evidence="1">
    <location>
        <begin position="1"/>
        <end position="18"/>
    </location>
</feature>
<feature type="chain" id="PRO_0000033220" description="Serpentine receptor class T-55">
    <location>
        <begin position="19"/>
        <end position="363"/>
    </location>
</feature>
<feature type="transmembrane region" description="Helical" evidence="1">
    <location>
        <begin position="70"/>
        <end position="90"/>
    </location>
</feature>
<feature type="transmembrane region" description="Helical" evidence="1">
    <location>
        <begin position="107"/>
        <end position="127"/>
    </location>
</feature>
<feature type="transmembrane region" description="Helical" evidence="1">
    <location>
        <begin position="143"/>
        <end position="163"/>
    </location>
</feature>
<feature type="transmembrane region" description="Helical" evidence="1">
    <location>
        <begin position="187"/>
        <end position="207"/>
    </location>
</feature>
<feature type="transmembrane region" description="Helical" evidence="1">
    <location>
        <begin position="231"/>
        <end position="251"/>
    </location>
</feature>
<feature type="transmembrane region" description="Helical" evidence="1">
    <location>
        <begin position="278"/>
        <end position="298"/>
    </location>
</feature>
<feature type="transmembrane region" description="Helical" evidence="1">
    <location>
        <begin position="303"/>
        <end position="323"/>
    </location>
</feature>
<comment type="subcellular location">
    <subcellularLocation>
        <location evidence="2">Membrane</location>
        <topology evidence="2">Multi-pass membrane protein</topology>
    </subcellularLocation>
</comment>
<comment type="similarity">
    <text evidence="2">Belongs to the nematode receptor-like protein srt family.</text>
</comment>
<reference key="1">
    <citation type="journal article" date="1998" name="Science">
        <title>Genome sequence of the nematode C. elegans: a platform for investigating biology.</title>
        <authorList>
            <consortium name="The C. elegans sequencing consortium"/>
        </authorList>
    </citation>
    <scope>NUCLEOTIDE SEQUENCE [LARGE SCALE GENOMIC DNA]</scope>
    <source>
        <strain>Bristol N2</strain>
    </source>
</reference>
<evidence type="ECO:0000255" key="1"/>
<evidence type="ECO:0000305" key="2"/>
<organism>
    <name type="scientific">Caenorhabditis elegans</name>
    <dbReference type="NCBI Taxonomy" id="6239"/>
    <lineage>
        <taxon>Eukaryota</taxon>
        <taxon>Metazoa</taxon>
        <taxon>Ecdysozoa</taxon>
        <taxon>Nematoda</taxon>
        <taxon>Chromadorea</taxon>
        <taxon>Rhabditida</taxon>
        <taxon>Rhabditina</taxon>
        <taxon>Rhabditomorpha</taxon>
        <taxon>Rhabditoidea</taxon>
        <taxon>Rhabditidae</taxon>
        <taxon>Peloderinae</taxon>
        <taxon>Caenorhabditis</taxon>
    </lineage>
</organism>
<gene>
    <name type="primary">srt-55</name>
    <name type="ORF">T16H12.8</name>
</gene>
<keyword id="KW-0472">Membrane</keyword>
<keyword id="KW-0675">Receptor</keyword>
<keyword id="KW-1185">Reference proteome</keyword>
<keyword id="KW-0732">Signal</keyword>
<keyword id="KW-0812">Transmembrane</keyword>
<keyword id="KW-1133">Transmembrane helix</keyword>